<feature type="chain" id="PRO_0000080605" description="Probable ubiquitin carboxyl-terminal hydrolase 4">
    <location>
        <begin position="1"/>
        <end position="593"/>
    </location>
</feature>
<feature type="domain" description="USP">
    <location>
        <begin position="227"/>
        <end position="573"/>
    </location>
</feature>
<feature type="active site" description="Nucleophile" evidence="2 3">
    <location>
        <position position="236"/>
    </location>
</feature>
<feature type="active site" description="Proton acceptor" evidence="2 3">
    <location>
        <position position="530"/>
    </location>
</feature>
<feature type="modified residue" description="Phosphoserine" evidence="4">
    <location>
        <position position="338"/>
    </location>
</feature>
<feature type="modified residue" description="Phosphoserine" evidence="4">
    <location>
        <position position="343"/>
    </location>
</feature>
<dbReference type="EC" id="3.4.19.12"/>
<dbReference type="EMBL" id="CU329671">
    <property type="protein sequence ID" value="CAA18405.2"/>
    <property type="molecule type" value="Genomic_DNA"/>
</dbReference>
<dbReference type="PIR" id="T39772">
    <property type="entry name" value="T39772"/>
</dbReference>
<dbReference type="RefSeq" id="NP_595732.2">
    <property type="nucleotide sequence ID" value="NM_001021630.2"/>
</dbReference>
<dbReference type="SMR" id="O60139"/>
<dbReference type="BioGRID" id="277355">
    <property type="interactions" value="91"/>
</dbReference>
<dbReference type="FunCoup" id="O60139">
    <property type="interactions" value="67"/>
</dbReference>
<dbReference type="STRING" id="284812.O60139"/>
<dbReference type="MEROPS" id="C19.A58"/>
<dbReference type="iPTMnet" id="O60139"/>
<dbReference type="PaxDb" id="4896-SPBC18H10.08c.1"/>
<dbReference type="EnsemblFungi" id="SPBC18H10.08c.1">
    <property type="protein sequence ID" value="SPBC18H10.08c.1:pep"/>
    <property type="gene ID" value="SPBC18H10.08c"/>
</dbReference>
<dbReference type="PomBase" id="SPBC18H10.08c">
    <property type="gene designation" value="ubp4"/>
</dbReference>
<dbReference type="VEuPathDB" id="FungiDB:SPBC18H10.08c"/>
<dbReference type="eggNOG" id="KOG1868">
    <property type="taxonomic scope" value="Eukaryota"/>
</dbReference>
<dbReference type="HOGENOM" id="CLU_474207_0_0_1"/>
<dbReference type="InParanoid" id="O60139"/>
<dbReference type="OMA" id="CRFEISV"/>
<dbReference type="Reactome" id="R-SPO-1358803">
    <property type="pathway name" value="Downregulation of ERBB2:ERBB3 signaling"/>
</dbReference>
<dbReference type="PRO" id="PR:O60139"/>
<dbReference type="Proteomes" id="UP000002485">
    <property type="component" value="Chromosome II"/>
</dbReference>
<dbReference type="GO" id="GO:0032153">
    <property type="term" value="C:cell division site"/>
    <property type="evidence" value="ECO:0007005"/>
    <property type="project" value="PomBase"/>
</dbReference>
<dbReference type="GO" id="GO:0005737">
    <property type="term" value="C:cytoplasm"/>
    <property type="evidence" value="ECO:0007005"/>
    <property type="project" value="PomBase"/>
</dbReference>
<dbReference type="GO" id="GO:0005768">
    <property type="term" value="C:endosome"/>
    <property type="evidence" value="ECO:0007005"/>
    <property type="project" value="PomBase"/>
</dbReference>
<dbReference type="GO" id="GO:0004843">
    <property type="term" value="F:cysteine-type deubiquitinase activity"/>
    <property type="evidence" value="ECO:0007669"/>
    <property type="project" value="UniProtKB-EC"/>
</dbReference>
<dbReference type="GO" id="GO:0140492">
    <property type="term" value="F:metal-dependent deubiquitinase activity"/>
    <property type="evidence" value="ECO:0000314"/>
    <property type="project" value="PomBase"/>
</dbReference>
<dbReference type="GO" id="GO:0016579">
    <property type="term" value="P:protein deubiquitination"/>
    <property type="evidence" value="ECO:0007669"/>
    <property type="project" value="InterPro"/>
</dbReference>
<dbReference type="GO" id="GO:0006508">
    <property type="term" value="P:proteolysis"/>
    <property type="evidence" value="ECO:0007669"/>
    <property type="project" value="UniProtKB-KW"/>
</dbReference>
<dbReference type="CDD" id="cd02674">
    <property type="entry name" value="Peptidase_C19R"/>
    <property type="match status" value="1"/>
</dbReference>
<dbReference type="FunFam" id="3.90.70.10:FF:000319">
    <property type="entry name" value="Clan CA, family C19, ubiquitin hydrolase-like cysteine peptidase"/>
    <property type="match status" value="1"/>
</dbReference>
<dbReference type="Gene3D" id="3.90.70.10">
    <property type="entry name" value="Cysteine proteinases"/>
    <property type="match status" value="1"/>
</dbReference>
<dbReference type="InterPro" id="IPR038765">
    <property type="entry name" value="Papain-like_cys_pep_sf"/>
</dbReference>
<dbReference type="InterPro" id="IPR001394">
    <property type="entry name" value="Peptidase_C19_UCH"/>
</dbReference>
<dbReference type="InterPro" id="IPR050185">
    <property type="entry name" value="Ub_carboxyl-term_hydrolase"/>
</dbReference>
<dbReference type="InterPro" id="IPR018200">
    <property type="entry name" value="USP_CS"/>
</dbReference>
<dbReference type="InterPro" id="IPR028889">
    <property type="entry name" value="USP_dom"/>
</dbReference>
<dbReference type="PANTHER" id="PTHR21646">
    <property type="entry name" value="UBIQUITIN CARBOXYL-TERMINAL HYDROLASE"/>
    <property type="match status" value="1"/>
</dbReference>
<dbReference type="PANTHER" id="PTHR21646:SF95">
    <property type="entry name" value="UBIQUITIN CARBOXYL-TERMINAL HYDROLASE 4-RELATED"/>
    <property type="match status" value="1"/>
</dbReference>
<dbReference type="Pfam" id="PF00443">
    <property type="entry name" value="UCH"/>
    <property type="match status" value="1"/>
</dbReference>
<dbReference type="SUPFAM" id="SSF54001">
    <property type="entry name" value="Cysteine proteinases"/>
    <property type="match status" value="1"/>
</dbReference>
<dbReference type="PROSITE" id="PS00972">
    <property type="entry name" value="USP_1"/>
    <property type="match status" value="1"/>
</dbReference>
<dbReference type="PROSITE" id="PS00973">
    <property type="entry name" value="USP_2"/>
    <property type="match status" value="1"/>
</dbReference>
<dbReference type="PROSITE" id="PS50235">
    <property type="entry name" value="USP_3"/>
    <property type="match status" value="1"/>
</dbReference>
<organism>
    <name type="scientific">Schizosaccharomyces pombe (strain 972 / ATCC 24843)</name>
    <name type="common">Fission yeast</name>
    <dbReference type="NCBI Taxonomy" id="284812"/>
    <lineage>
        <taxon>Eukaryota</taxon>
        <taxon>Fungi</taxon>
        <taxon>Dikarya</taxon>
        <taxon>Ascomycota</taxon>
        <taxon>Taphrinomycotina</taxon>
        <taxon>Schizosaccharomycetes</taxon>
        <taxon>Schizosaccharomycetales</taxon>
        <taxon>Schizosaccharomycetaceae</taxon>
        <taxon>Schizosaccharomyces</taxon>
    </lineage>
</organism>
<keyword id="KW-0963">Cytoplasm</keyword>
<keyword id="KW-0967">Endosome</keyword>
<keyword id="KW-0378">Hydrolase</keyword>
<keyword id="KW-0597">Phosphoprotein</keyword>
<keyword id="KW-0645">Protease</keyword>
<keyword id="KW-1185">Reference proteome</keyword>
<keyword id="KW-0788">Thiol protease</keyword>
<keyword id="KW-0833">Ubl conjugation pathway</keyword>
<gene>
    <name type="primary">ubp4</name>
    <name type="ORF">SPBC18H10.08c</name>
</gene>
<name>UBP4_SCHPO</name>
<proteinExistence type="evidence at protein level"/>
<reference key="1">
    <citation type="journal article" date="2002" name="Nature">
        <title>The genome sequence of Schizosaccharomyces pombe.</title>
        <authorList>
            <person name="Wood V."/>
            <person name="Gwilliam R."/>
            <person name="Rajandream M.A."/>
            <person name="Lyne M.H."/>
            <person name="Lyne R."/>
            <person name="Stewart A."/>
            <person name="Sgouros J.G."/>
            <person name="Peat N."/>
            <person name="Hayles J."/>
            <person name="Baker S.G."/>
            <person name="Basham D."/>
            <person name="Bowman S."/>
            <person name="Brooks K."/>
            <person name="Brown D."/>
            <person name="Brown S."/>
            <person name="Chillingworth T."/>
            <person name="Churcher C.M."/>
            <person name="Collins M."/>
            <person name="Connor R."/>
            <person name="Cronin A."/>
            <person name="Davis P."/>
            <person name="Feltwell T."/>
            <person name="Fraser A."/>
            <person name="Gentles S."/>
            <person name="Goble A."/>
            <person name="Hamlin N."/>
            <person name="Harris D.E."/>
            <person name="Hidalgo J."/>
            <person name="Hodgson G."/>
            <person name="Holroyd S."/>
            <person name="Hornsby T."/>
            <person name="Howarth S."/>
            <person name="Huckle E.J."/>
            <person name="Hunt S."/>
            <person name="Jagels K."/>
            <person name="James K.D."/>
            <person name="Jones L."/>
            <person name="Jones M."/>
            <person name="Leather S."/>
            <person name="McDonald S."/>
            <person name="McLean J."/>
            <person name="Mooney P."/>
            <person name="Moule S."/>
            <person name="Mungall K.L."/>
            <person name="Murphy L.D."/>
            <person name="Niblett D."/>
            <person name="Odell C."/>
            <person name="Oliver K."/>
            <person name="O'Neil S."/>
            <person name="Pearson D."/>
            <person name="Quail M.A."/>
            <person name="Rabbinowitsch E."/>
            <person name="Rutherford K.M."/>
            <person name="Rutter S."/>
            <person name="Saunders D."/>
            <person name="Seeger K."/>
            <person name="Sharp S."/>
            <person name="Skelton J."/>
            <person name="Simmonds M.N."/>
            <person name="Squares R."/>
            <person name="Squares S."/>
            <person name="Stevens K."/>
            <person name="Taylor K."/>
            <person name="Taylor R.G."/>
            <person name="Tivey A."/>
            <person name="Walsh S.V."/>
            <person name="Warren T."/>
            <person name="Whitehead S."/>
            <person name="Woodward J.R."/>
            <person name="Volckaert G."/>
            <person name="Aert R."/>
            <person name="Robben J."/>
            <person name="Grymonprez B."/>
            <person name="Weltjens I."/>
            <person name="Vanstreels E."/>
            <person name="Rieger M."/>
            <person name="Schaefer M."/>
            <person name="Mueller-Auer S."/>
            <person name="Gabel C."/>
            <person name="Fuchs M."/>
            <person name="Duesterhoeft A."/>
            <person name="Fritzc C."/>
            <person name="Holzer E."/>
            <person name="Moestl D."/>
            <person name="Hilbert H."/>
            <person name="Borzym K."/>
            <person name="Langer I."/>
            <person name="Beck A."/>
            <person name="Lehrach H."/>
            <person name="Reinhardt R."/>
            <person name="Pohl T.M."/>
            <person name="Eger P."/>
            <person name="Zimmermann W."/>
            <person name="Wedler H."/>
            <person name="Wambutt R."/>
            <person name="Purnelle B."/>
            <person name="Goffeau A."/>
            <person name="Cadieu E."/>
            <person name="Dreano S."/>
            <person name="Gloux S."/>
            <person name="Lelaure V."/>
            <person name="Mottier S."/>
            <person name="Galibert F."/>
            <person name="Aves S.J."/>
            <person name="Xiang Z."/>
            <person name="Hunt C."/>
            <person name="Moore K."/>
            <person name="Hurst S.M."/>
            <person name="Lucas M."/>
            <person name="Rochet M."/>
            <person name="Gaillardin C."/>
            <person name="Tallada V.A."/>
            <person name="Garzon A."/>
            <person name="Thode G."/>
            <person name="Daga R.R."/>
            <person name="Cruzado L."/>
            <person name="Jimenez J."/>
            <person name="Sanchez M."/>
            <person name="del Rey F."/>
            <person name="Benito J."/>
            <person name="Dominguez A."/>
            <person name="Revuelta J.L."/>
            <person name="Moreno S."/>
            <person name="Armstrong J."/>
            <person name="Forsburg S.L."/>
            <person name="Cerutti L."/>
            <person name="Lowe T."/>
            <person name="McCombie W.R."/>
            <person name="Paulsen I."/>
            <person name="Potashkin J."/>
            <person name="Shpakovski G.V."/>
            <person name="Ussery D."/>
            <person name="Barrell B.G."/>
            <person name="Nurse P."/>
        </authorList>
    </citation>
    <scope>NUCLEOTIDE SEQUENCE [LARGE SCALE GENOMIC DNA]</scope>
    <source>
        <strain>972 / ATCC 24843</strain>
    </source>
</reference>
<reference key="2">
    <citation type="journal article" date="2006" name="Nat. Biotechnol.">
        <title>ORFeome cloning and global analysis of protein localization in the fission yeast Schizosaccharomyces pombe.</title>
        <authorList>
            <person name="Matsuyama A."/>
            <person name="Arai R."/>
            <person name="Yashiroda Y."/>
            <person name="Shirai A."/>
            <person name="Kamata A."/>
            <person name="Sekido S."/>
            <person name="Kobayashi Y."/>
            <person name="Hashimoto A."/>
            <person name="Hamamoto M."/>
            <person name="Hiraoka Y."/>
            <person name="Horinouchi S."/>
            <person name="Yoshida M."/>
        </authorList>
    </citation>
    <scope>SUBCELLULAR LOCATION [LARGE SCALE ANALYSIS]</scope>
</reference>
<reference key="3">
    <citation type="journal article" date="2008" name="J. Proteome Res.">
        <title>Phosphoproteome analysis of fission yeast.</title>
        <authorList>
            <person name="Wilson-Grady J.T."/>
            <person name="Villen J."/>
            <person name="Gygi S.P."/>
        </authorList>
    </citation>
    <scope>PHOSPHORYLATION [LARGE SCALE ANALYSIS] AT SER-338 AND SER-343</scope>
    <scope>IDENTIFICATION BY MASS SPECTROMETRY</scope>
</reference>
<reference key="4">
    <citation type="journal article" date="2010" name="PLoS Biol.">
        <title>A global census of fission yeast deubiquitinating enzyme localization and interaction networks reveals distinct compartmentalization profiles and overlapping functions in endocytosis and polarity.</title>
        <authorList>
            <person name="Kouranti I."/>
            <person name="McLean J.R."/>
            <person name="Feoktistova A."/>
            <person name="Liang P."/>
            <person name="Johnson A.E."/>
            <person name="Roberts-Galbraith R.H."/>
            <person name="Gould K.L."/>
        </authorList>
    </citation>
    <scope>INTERACTION WITH SFP47</scope>
    <scope>SUBCELLULAR LOCATION</scope>
</reference>
<reference key="5">
    <citation type="journal article" date="2011" name="Genetics">
        <title>Augmented annotation of the Schizosaccharomyces pombe genome reveals additional genes required for growth and viability.</title>
        <authorList>
            <person name="Bitton D.A."/>
            <person name="Wood V."/>
            <person name="Scutt P.J."/>
            <person name="Grallert A."/>
            <person name="Yates T."/>
            <person name="Smith D.L."/>
            <person name="Hagan I.M."/>
            <person name="Miller C.J."/>
        </authorList>
    </citation>
    <scope>REVISION OF GENE MODEL</scope>
</reference>
<protein>
    <recommendedName>
        <fullName>Probable ubiquitin carboxyl-terminal hydrolase 4</fullName>
        <ecNumber>3.4.19.12</ecNumber>
    </recommendedName>
    <alternativeName>
        <fullName>Deubiquitinating enzyme 4</fullName>
    </alternativeName>
    <alternativeName>
        <fullName>Ubiquitin thioesterase 4</fullName>
    </alternativeName>
    <alternativeName>
        <fullName>Ubiquitin-specific-processing protease 4</fullName>
    </alternativeName>
</protein>
<evidence type="ECO:0000250" key="1"/>
<evidence type="ECO:0000255" key="2">
    <source>
        <dbReference type="PROSITE-ProRule" id="PRU10092"/>
    </source>
</evidence>
<evidence type="ECO:0000255" key="3">
    <source>
        <dbReference type="PROSITE-ProRule" id="PRU10093"/>
    </source>
</evidence>
<evidence type="ECO:0000269" key="4">
    <source>
    </source>
</evidence>
<evidence type="ECO:0000269" key="5">
    <source>
    </source>
</evidence>
<evidence type="ECO:0000305" key="6"/>
<sequence>MSDDYFDRLFELAFVYINEDETIQSCSFRGQRWLEEAQTLEQKNSLLKAYYYYLKALKLAYEIPCRFEISVKSTHYGEFKQFQKLAIQAVSKAFTIKSKLAVKHYLPVIQISDALSLSKKSSLKVLFLNFYSQESSKGYVFSKHTIAIPISCLQSMDSSKIYDFLKSAPFHPSMVICYSLERYFEDVSLAYKLYSMLRSLKLDPHFMELANPKKVDSSLSYENYQPIGLTNLGNTCYMNCVLQCLFACKDLTIPMLQGRGLLQNINTKNPLGTGGKITSAFFSLLQSVLLNHGQRSISPRNFLEIVQSLNRDFSIDGQCDAQEFLNFFLDKLHEDLNSNASRSPIAPLTEDQLSAREELPLSHFSHIEWNLHLRSNKSIVVNNFVGQLCSRTQCMTCGRTSTTFAPFTSLAIPIDDVSHVVSLQECLLKFSAPELLQGHDGWHCPVCKVQRSAKKVIMISKLPEYLIIQIQRFKISVMGRKKIDTPLGLSLQIPSKMLVPPSFQSGIGYIPSNYNLFAFICHYGQLENGHYISDVLFNNEWCHIDDSIVRTVGGITDLREDFSSSYILFYKRSSLLEEFEDKCPKMTLKRNVK</sequence>
<accession>O60139</accession>
<comment type="function">
    <text evidence="1">Has an ATP-independent isopeptidase activity, cleaving at the C-terminus of the ubiquitin moiety. Acts late in the proteolytic pathway in conjunction with the 26S proteasome. Plays a role in avoiding DNA overreplication (By similarity).</text>
</comment>
<comment type="catalytic activity">
    <reaction>
        <text>Thiol-dependent hydrolysis of ester, thioester, amide, peptide and isopeptide bonds formed by the C-terminal Gly of ubiquitin (a 76-residue protein attached to proteins as an intracellular targeting signal).</text>
        <dbReference type="EC" id="3.4.19.12"/>
    </reaction>
</comment>
<comment type="subunit">
    <text evidence="5">Interacts with sfp47.</text>
</comment>
<comment type="subcellular location">
    <subcellularLocation>
        <location>Cytoplasm</location>
    </subcellularLocation>
    <subcellularLocation>
        <location>Endosome</location>
    </subcellularLocation>
</comment>
<comment type="similarity">
    <text evidence="6">Belongs to the peptidase C19 family.</text>
</comment>